<keyword id="KW-0489">Methyltransferase</keyword>
<keyword id="KW-0949">S-adenosyl-L-methionine</keyword>
<keyword id="KW-0808">Transferase</keyword>
<protein>
    <recommendedName>
        <fullName>Putative S-adenosylmethionine-dependent methyltransferase RcsF</fullName>
        <ecNumber>2.1.1.-</ecNumber>
    </recommendedName>
</protein>
<feature type="chain" id="PRO_0000155615" description="Putative S-adenosylmethionine-dependent methyltransferase RcsF">
    <location>
        <begin position="1"/>
        <end position="240"/>
    </location>
</feature>
<feature type="domain" description="TsaA-like" evidence="2">
    <location>
        <begin position="5"/>
        <end position="142"/>
    </location>
</feature>
<feature type="binding site" evidence="1">
    <location>
        <begin position="22"/>
        <end position="24"/>
    </location>
    <ligand>
        <name>S-adenosyl-L-methionine</name>
        <dbReference type="ChEBI" id="CHEBI:59789"/>
    </ligand>
</feature>
<feature type="binding site" evidence="1">
    <location>
        <begin position="63"/>
        <end position="64"/>
    </location>
    <ligand>
        <name>S-adenosyl-L-methionine</name>
        <dbReference type="ChEBI" id="CHEBI:59789"/>
    </ligand>
</feature>
<feature type="binding site" evidence="1">
    <location>
        <position position="91"/>
    </location>
    <ligand>
        <name>S-adenosyl-L-methionine</name>
        <dbReference type="ChEBI" id="CHEBI:59789"/>
    </ligand>
</feature>
<feature type="binding site" evidence="1">
    <location>
        <begin position="122"/>
        <end position="125"/>
    </location>
    <ligand>
        <name>S-adenosyl-L-methionine</name>
        <dbReference type="ChEBI" id="CHEBI:59789"/>
    </ligand>
</feature>
<name>RCSF2_PSEAI</name>
<gene>
    <name type="primary">rcsF</name>
</gene>
<sequence>MSHSISPIGHVRSCFKEKFAIPRQPQLAPAATGVLELLPPFDTGDAVEGLEQVSHVWLIFLFHQALEDKPRLKVRPPRLGGNQSMGVFATRATHRPNGLGQSVVKLEKVEPGRLWLSGIDLLDGTPVIDIKPYVPYADIVPDAHNAIADAPPSSIAVHWSDEALRQAHEHGLRLCQPVRELVGNASPRTRARPTRSRRPSAAMACACGTSTCTGTTPPMARSACWTCNAPPTETSLSPQD</sequence>
<reference key="1">
    <citation type="submission" date="1998-03" db="EMBL/GenBank/DDBJ databases">
        <authorList>
            <person name="Campos-Garcia J."/>
            <person name="Caro A.D."/>
            <person name="Najera R."/>
            <person name="Miller R.M."/>
            <person name="Al-Tahhan R.A."/>
            <person name="Soberon-Chavez G."/>
        </authorList>
    </citation>
    <scope>NUCLEOTIDE SEQUENCE [GENOMIC DNA]</scope>
    <source>
        <strain>W51D</strain>
    </source>
</reference>
<dbReference type="EC" id="2.1.1.-"/>
<dbReference type="EMBL" id="AF052586">
    <property type="protein sequence ID" value="AAC62539.1"/>
    <property type="molecule type" value="Genomic_DNA"/>
</dbReference>
<dbReference type="SMR" id="O68638"/>
<dbReference type="GO" id="GO:0089715">
    <property type="term" value="F:tRNA (L-threonylcarbamoyladenosine(37)-C2) methyltransferase activity"/>
    <property type="evidence" value="ECO:0007669"/>
    <property type="project" value="TreeGrafter"/>
</dbReference>
<dbReference type="GO" id="GO:0032259">
    <property type="term" value="P:methylation"/>
    <property type="evidence" value="ECO:0007669"/>
    <property type="project" value="UniProtKB-KW"/>
</dbReference>
<dbReference type="CDD" id="cd09281">
    <property type="entry name" value="UPF0066"/>
    <property type="match status" value="1"/>
</dbReference>
<dbReference type="Gene3D" id="2.40.30.70">
    <property type="entry name" value="YaeB-like"/>
    <property type="match status" value="1"/>
</dbReference>
<dbReference type="InterPro" id="IPR023370">
    <property type="entry name" value="TrmO-like_N"/>
</dbReference>
<dbReference type="InterPro" id="IPR023368">
    <property type="entry name" value="UPF0066_cons_site"/>
</dbReference>
<dbReference type="InterPro" id="IPR040372">
    <property type="entry name" value="YaeB-like"/>
</dbReference>
<dbReference type="InterPro" id="IPR036413">
    <property type="entry name" value="YaeB-like_sf"/>
</dbReference>
<dbReference type="InterPro" id="IPR036414">
    <property type="entry name" value="YaeB_N_sf"/>
</dbReference>
<dbReference type="NCBIfam" id="TIGR00104">
    <property type="entry name" value="tRNA_TsaA"/>
    <property type="match status" value="1"/>
</dbReference>
<dbReference type="PANTHER" id="PTHR12818">
    <property type="entry name" value="TRNA (ADENINE(37)-N6)-METHYLTRANSFERASE"/>
    <property type="match status" value="1"/>
</dbReference>
<dbReference type="PANTHER" id="PTHR12818:SF0">
    <property type="entry name" value="TRNA (ADENINE(37)-N6)-METHYLTRANSFERASE"/>
    <property type="match status" value="1"/>
</dbReference>
<dbReference type="Pfam" id="PF01980">
    <property type="entry name" value="TrmO_N"/>
    <property type="match status" value="1"/>
</dbReference>
<dbReference type="SUPFAM" id="SSF118196">
    <property type="entry name" value="YaeB-like"/>
    <property type="match status" value="1"/>
</dbReference>
<dbReference type="PROSITE" id="PS01318">
    <property type="entry name" value="TSAA_1"/>
    <property type="match status" value="1"/>
</dbReference>
<dbReference type="PROSITE" id="PS51668">
    <property type="entry name" value="TSAA_2"/>
    <property type="match status" value="1"/>
</dbReference>
<organism>
    <name type="scientific">Pseudomonas aeruginosa</name>
    <dbReference type="NCBI Taxonomy" id="287"/>
    <lineage>
        <taxon>Bacteria</taxon>
        <taxon>Pseudomonadati</taxon>
        <taxon>Pseudomonadota</taxon>
        <taxon>Gammaproteobacteria</taxon>
        <taxon>Pseudomonadales</taxon>
        <taxon>Pseudomonadaceae</taxon>
        <taxon>Pseudomonas</taxon>
    </lineage>
</organism>
<accession>O68638</accession>
<comment type="similarity">
    <text evidence="3">Belongs to the tRNA methyltransferase O family.</text>
</comment>
<evidence type="ECO:0000250" key="1">
    <source>
        <dbReference type="UniProtKB" id="Q6NDF6"/>
    </source>
</evidence>
<evidence type="ECO:0000255" key="2">
    <source>
        <dbReference type="PROSITE-ProRule" id="PRU01003"/>
    </source>
</evidence>
<evidence type="ECO:0000305" key="3"/>
<proteinExistence type="inferred from homology"/>